<keyword id="KW-0256">Endoplasmic reticulum</keyword>
<keyword id="KW-0325">Glycoprotein</keyword>
<keyword id="KW-0472">Membrane</keyword>
<keyword id="KW-1185">Reference proteome</keyword>
<keyword id="KW-0812">Transmembrane</keyword>
<keyword id="KW-1133">Transmembrane helix</keyword>
<proteinExistence type="inferred from homology"/>
<organism>
    <name type="scientific">Eremothecium gossypii (strain ATCC 10895 / CBS 109.51 / FGSC 9923 / NRRL Y-1056)</name>
    <name type="common">Yeast</name>
    <name type="synonym">Ashbya gossypii</name>
    <dbReference type="NCBI Taxonomy" id="284811"/>
    <lineage>
        <taxon>Eukaryota</taxon>
        <taxon>Fungi</taxon>
        <taxon>Dikarya</taxon>
        <taxon>Ascomycota</taxon>
        <taxon>Saccharomycotina</taxon>
        <taxon>Saccharomycetes</taxon>
        <taxon>Saccharomycetales</taxon>
        <taxon>Saccharomycetaceae</taxon>
        <taxon>Eremothecium</taxon>
    </lineage>
</organism>
<gene>
    <name type="primary">IZH3</name>
    <name type="ordered locus">AAL153C</name>
</gene>
<reference key="1">
    <citation type="journal article" date="2004" name="Science">
        <title>The Ashbya gossypii genome as a tool for mapping the ancient Saccharomyces cerevisiae genome.</title>
        <authorList>
            <person name="Dietrich F.S."/>
            <person name="Voegeli S."/>
            <person name="Brachat S."/>
            <person name="Lerch A."/>
            <person name="Gates K."/>
            <person name="Steiner S."/>
            <person name="Mohr C."/>
            <person name="Poehlmann R."/>
            <person name="Luedi P."/>
            <person name="Choi S."/>
            <person name="Wing R.A."/>
            <person name="Flavier A."/>
            <person name="Gaffney T.D."/>
            <person name="Philippsen P."/>
        </authorList>
    </citation>
    <scope>NUCLEOTIDE SEQUENCE [LARGE SCALE GENOMIC DNA]</scope>
    <source>
        <strain>ATCC 10895 / CBS 109.51 / FGSC 9923 / NRRL Y-1056</strain>
    </source>
</reference>
<reference key="2">
    <citation type="journal article" date="2013" name="G3 (Bethesda)">
        <title>Genomes of Ashbya fungi isolated from insects reveal four mating-type loci, numerous translocations, lack of transposons, and distinct gene duplications.</title>
        <authorList>
            <person name="Dietrich F.S."/>
            <person name="Voegeli S."/>
            <person name="Kuo S."/>
            <person name="Philippsen P."/>
        </authorList>
    </citation>
    <scope>GENOME REANNOTATION</scope>
    <source>
        <strain>ATCC 10895 / CBS 109.51 / FGSC 9923 / NRRL Y-1056</strain>
    </source>
</reference>
<evidence type="ECO:0000250" key="1"/>
<evidence type="ECO:0000255" key="2"/>
<evidence type="ECO:0000256" key="3">
    <source>
        <dbReference type="SAM" id="MobiDB-lite"/>
    </source>
</evidence>
<evidence type="ECO:0000305" key="4"/>
<name>IZH3_EREGS</name>
<dbReference type="EMBL" id="AE016814">
    <property type="protein sequence ID" value="AAS50213.1"/>
    <property type="molecule type" value="Genomic_DNA"/>
</dbReference>
<dbReference type="RefSeq" id="NP_982389.1">
    <property type="nucleotide sequence ID" value="NM_207742.1"/>
</dbReference>
<dbReference type="SMR" id="Q75F81"/>
<dbReference type="FunCoup" id="Q75F81">
    <property type="interactions" value="43"/>
</dbReference>
<dbReference type="STRING" id="284811.Q75F81"/>
<dbReference type="GlyCosmos" id="Q75F81">
    <property type="glycosylation" value="2 sites, No reported glycans"/>
</dbReference>
<dbReference type="EnsemblFungi" id="AAS50213">
    <property type="protein sequence ID" value="AAS50213"/>
    <property type="gene ID" value="AGOS_AAL153C"/>
</dbReference>
<dbReference type="GeneID" id="4618444"/>
<dbReference type="KEGG" id="ago:AGOS_AAL153C"/>
<dbReference type="eggNOG" id="KOG0748">
    <property type="taxonomic scope" value="Eukaryota"/>
</dbReference>
<dbReference type="HOGENOM" id="CLU_655480_0_0_1"/>
<dbReference type="InParanoid" id="Q75F81"/>
<dbReference type="OMA" id="IVYANRF"/>
<dbReference type="OrthoDB" id="5585746at2759"/>
<dbReference type="Proteomes" id="UP000000591">
    <property type="component" value="Chromosome I"/>
</dbReference>
<dbReference type="GO" id="GO:0005789">
    <property type="term" value="C:endoplasmic reticulum membrane"/>
    <property type="evidence" value="ECO:0007669"/>
    <property type="project" value="UniProtKB-SubCell"/>
</dbReference>
<dbReference type="GO" id="GO:0038023">
    <property type="term" value="F:signaling receptor activity"/>
    <property type="evidence" value="ECO:0000318"/>
    <property type="project" value="GO_Central"/>
</dbReference>
<dbReference type="GO" id="GO:0006882">
    <property type="term" value="P:intracellular zinc ion homeostasis"/>
    <property type="evidence" value="ECO:0000318"/>
    <property type="project" value="GO_Central"/>
</dbReference>
<dbReference type="InterPro" id="IPR004254">
    <property type="entry name" value="AdipoR/HlyIII-related"/>
</dbReference>
<dbReference type="PANTHER" id="PTHR20855:SF97">
    <property type="entry name" value="ADIPOR-LIKE RECEPTOR IZH3-RELATED"/>
    <property type="match status" value="1"/>
</dbReference>
<dbReference type="PANTHER" id="PTHR20855">
    <property type="entry name" value="ADIPOR/PROGESTIN RECEPTOR-RELATED"/>
    <property type="match status" value="1"/>
</dbReference>
<dbReference type="Pfam" id="PF03006">
    <property type="entry name" value="HlyIII"/>
    <property type="match status" value="1"/>
</dbReference>
<accession>Q75F81</accession>
<comment type="function">
    <text evidence="1">ADIPOR-like receptor involved in zinc metabolism either by altering membrane sterol content or by directly altering cellular zinc levels.</text>
</comment>
<comment type="subcellular location">
    <subcellularLocation>
        <location evidence="1">Endoplasmic reticulum membrane</location>
        <topology evidence="1">Multi-pass membrane protein</topology>
    </subcellularLocation>
</comment>
<comment type="similarity">
    <text evidence="4">Belongs to the ADIPOR family.</text>
</comment>
<protein>
    <recommendedName>
        <fullName>ADIPOR-like receptor IZH3</fullName>
    </recommendedName>
</protein>
<feature type="chain" id="PRO_0000240374" description="ADIPOR-like receptor IZH3">
    <location>
        <begin position="1"/>
        <end position="419"/>
    </location>
</feature>
<feature type="topological domain" description="Lumenal" evidence="1">
    <location>
        <begin position="1"/>
        <end position="147"/>
    </location>
</feature>
<feature type="transmembrane region" description="Helical" evidence="2">
    <location>
        <begin position="148"/>
        <end position="168"/>
    </location>
</feature>
<feature type="topological domain" description="Cytoplasmic" evidence="1">
    <location>
        <begin position="169"/>
        <end position="184"/>
    </location>
</feature>
<feature type="transmembrane region" description="Helical" evidence="2">
    <location>
        <begin position="185"/>
        <end position="205"/>
    </location>
</feature>
<feature type="topological domain" description="Lumenal" evidence="1">
    <location>
        <begin position="206"/>
        <end position="225"/>
    </location>
</feature>
<feature type="transmembrane region" description="Helical" evidence="2">
    <location>
        <begin position="226"/>
        <end position="246"/>
    </location>
</feature>
<feature type="topological domain" description="Cytoplasmic" evidence="1">
    <location>
        <begin position="247"/>
        <end position="249"/>
    </location>
</feature>
<feature type="transmembrane region" description="Helical" evidence="2">
    <location>
        <begin position="250"/>
        <end position="270"/>
    </location>
</feature>
<feature type="topological domain" description="Lumenal" evidence="1">
    <location>
        <begin position="271"/>
        <end position="283"/>
    </location>
</feature>
<feature type="transmembrane region" description="Helical" evidence="2">
    <location>
        <begin position="284"/>
        <end position="304"/>
    </location>
</feature>
<feature type="topological domain" description="Cytoplasmic" evidence="1">
    <location>
        <begin position="305"/>
        <end position="311"/>
    </location>
</feature>
<feature type="transmembrane region" description="Helical" evidence="2">
    <location>
        <begin position="312"/>
        <end position="332"/>
    </location>
</feature>
<feature type="topological domain" description="Lumenal" evidence="1">
    <location>
        <begin position="333"/>
        <end position="377"/>
    </location>
</feature>
<feature type="transmembrane region" description="Helical" evidence="2">
    <location>
        <begin position="378"/>
        <end position="398"/>
    </location>
</feature>
<feature type="topological domain" description="Cytoplasmic" evidence="2">
    <location>
        <begin position="399"/>
        <end position="419"/>
    </location>
</feature>
<feature type="region of interest" description="Disordered" evidence="3">
    <location>
        <begin position="1"/>
        <end position="65"/>
    </location>
</feature>
<feature type="glycosylation site" description="N-linked (GlcNAc...) asparagine" evidence="2">
    <location>
        <position position="145"/>
    </location>
</feature>
<feature type="glycosylation site" description="N-linked (GlcNAc...) asparagine" evidence="2">
    <location>
        <position position="208"/>
    </location>
</feature>
<sequence length="419" mass="47153">MSHPNTHMPRTHAVHGRAAPQRRGCRTSVEKTDQSGHSRSSLAESAMEQAQLRSRGEAGGGRSVLCASGEPGSAHKWAGAVTCSGAEEQPLHWAESRARGLARHLHYWELPYAWRENRYIIYGHRFYHSHRKSLLSVLNAYGWHNETINIWSHLVGAAVLAYLLCWGWPRSDVYRAAQVPRLAKWAIGAFLACGVKCMASSVAWHTFNGTCHLKLRSRFVCVDYTGITLLVTASVVTTVAVTLYGLSRPLMYAYMVASIGLGTAAGVMNWSPHFDRPEARPLRIAVYVGLAALGLVSFVHVWMQVRWASAHLMAPLVYKSLVWYGIGVVFYATLVPERWRSDVTLDCCSGPVHEAACRQFRDLPPVARKDRQFWSLWWVDYFCHSHFLWHVFVVLGVVGHYRAVLQMSRIVWLDAGRAF</sequence>